<protein>
    <recommendedName>
        <fullName evidence="1">Large ribosomal subunit protein uL11</fullName>
    </recommendedName>
    <alternativeName>
        <fullName evidence="2">50S ribosomal protein L11</fullName>
    </alternativeName>
</protein>
<name>RL11_ACISJ</name>
<accession>A1WCN3</accession>
<feature type="chain" id="PRO_1000046130" description="Large ribosomal subunit protein uL11">
    <location>
        <begin position="1"/>
        <end position="143"/>
    </location>
</feature>
<gene>
    <name evidence="1" type="primary">rplK</name>
    <name type="ordered locus">Ajs_3901</name>
</gene>
<keyword id="KW-0488">Methylation</keyword>
<keyword id="KW-0687">Ribonucleoprotein</keyword>
<keyword id="KW-0689">Ribosomal protein</keyword>
<keyword id="KW-0694">RNA-binding</keyword>
<keyword id="KW-0699">rRNA-binding</keyword>
<dbReference type="EMBL" id="CP000539">
    <property type="protein sequence ID" value="ABM44008.1"/>
    <property type="molecule type" value="Genomic_DNA"/>
</dbReference>
<dbReference type="SMR" id="A1WCN3"/>
<dbReference type="STRING" id="232721.Ajs_3901"/>
<dbReference type="KEGG" id="ajs:Ajs_3901"/>
<dbReference type="eggNOG" id="COG0080">
    <property type="taxonomic scope" value="Bacteria"/>
</dbReference>
<dbReference type="HOGENOM" id="CLU_074237_2_0_4"/>
<dbReference type="Proteomes" id="UP000000645">
    <property type="component" value="Chromosome"/>
</dbReference>
<dbReference type="GO" id="GO:0022625">
    <property type="term" value="C:cytosolic large ribosomal subunit"/>
    <property type="evidence" value="ECO:0007669"/>
    <property type="project" value="TreeGrafter"/>
</dbReference>
<dbReference type="GO" id="GO:0070180">
    <property type="term" value="F:large ribosomal subunit rRNA binding"/>
    <property type="evidence" value="ECO:0007669"/>
    <property type="project" value="UniProtKB-UniRule"/>
</dbReference>
<dbReference type="GO" id="GO:0003735">
    <property type="term" value="F:structural constituent of ribosome"/>
    <property type="evidence" value="ECO:0007669"/>
    <property type="project" value="InterPro"/>
</dbReference>
<dbReference type="GO" id="GO:0006412">
    <property type="term" value="P:translation"/>
    <property type="evidence" value="ECO:0007669"/>
    <property type="project" value="UniProtKB-UniRule"/>
</dbReference>
<dbReference type="CDD" id="cd00349">
    <property type="entry name" value="Ribosomal_L11"/>
    <property type="match status" value="1"/>
</dbReference>
<dbReference type="FunFam" id="1.10.10.250:FF:000001">
    <property type="entry name" value="50S ribosomal protein L11"/>
    <property type="match status" value="1"/>
</dbReference>
<dbReference type="FunFam" id="3.30.1550.10:FF:000001">
    <property type="entry name" value="50S ribosomal protein L11"/>
    <property type="match status" value="1"/>
</dbReference>
<dbReference type="Gene3D" id="1.10.10.250">
    <property type="entry name" value="Ribosomal protein L11, C-terminal domain"/>
    <property type="match status" value="1"/>
</dbReference>
<dbReference type="Gene3D" id="3.30.1550.10">
    <property type="entry name" value="Ribosomal protein L11/L12, N-terminal domain"/>
    <property type="match status" value="1"/>
</dbReference>
<dbReference type="HAMAP" id="MF_00736">
    <property type="entry name" value="Ribosomal_uL11"/>
    <property type="match status" value="1"/>
</dbReference>
<dbReference type="InterPro" id="IPR000911">
    <property type="entry name" value="Ribosomal_uL11"/>
</dbReference>
<dbReference type="InterPro" id="IPR006519">
    <property type="entry name" value="Ribosomal_uL11_bac-typ"/>
</dbReference>
<dbReference type="InterPro" id="IPR020783">
    <property type="entry name" value="Ribosomal_uL11_C"/>
</dbReference>
<dbReference type="InterPro" id="IPR036769">
    <property type="entry name" value="Ribosomal_uL11_C_sf"/>
</dbReference>
<dbReference type="InterPro" id="IPR020785">
    <property type="entry name" value="Ribosomal_uL11_CS"/>
</dbReference>
<dbReference type="InterPro" id="IPR020784">
    <property type="entry name" value="Ribosomal_uL11_N"/>
</dbReference>
<dbReference type="InterPro" id="IPR036796">
    <property type="entry name" value="Ribosomal_uL11_N_sf"/>
</dbReference>
<dbReference type="NCBIfam" id="TIGR01632">
    <property type="entry name" value="L11_bact"/>
    <property type="match status" value="1"/>
</dbReference>
<dbReference type="PANTHER" id="PTHR11661">
    <property type="entry name" value="60S RIBOSOMAL PROTEIN L12"/>
    <property type="match status" value="1"/>
</dbReference>
<dbReference type="PANTHER" id="PTHR11661:SF1">
    <property type="entry name" value="LARGE RIBOSOMAL SUBUNIT PROTEIN UL11M"/>
    <property type="match status" value="1"/>
</dbReference>
<dbReference type="Pfam" id="PF00298">
    <property type="entry name" value="Ribosomal_L11"/>
    <property type="match status" value="1"/>
</dbReference>
<dbReference type="Pfam" id="PF03946">
    <property type="entry name" value="Ribosomal_L11_N"/>
    <property type="match status" value="1"/>
</dbReference>
<dbReference type="SMART" id="SM00649">
    <property type="entry name" value="RL11"/>
    <property type="match status" value="1"/>
</dbReference>
<dbReference type="SUPFAM" id="SSF54747">
    <property type="entry name" value="Ribosomal L11/L12e N-terminal domain"/>
    <property type="match status" value="1"/>
</dbReference>
<dbReference type="SUPFAM" id="SSF46906">
    <property type="entry name" value="Ribosomal protein L11, C-terminal domain"/>
    <property type="match status" value="1"/>
</dbReference>
<dbReference type="PROSITE" id="PS00359">
    <property type="entry name" value="RIBOSOMAL_L11"/>
    <property type="match status" value="1"/>
</dbReference>
<reference key="1">
    <citation type="submission" date="2006-12" db="EMBL/GenBank/DDBJ databases">
        <title>Complete sequence of chromosome 1 of Acidovorax sp. JS42.</title>
        <authorList>
            <person name="Copeland A."/>
            <person name="Lucas S."/>
            <person name="Lapidus A."/>
            <person name="Barry K."/>
            <person name="Detter J.C."/>
            <person name="Glavina del Rio T."/>
            <person name="Dalin E."/>
            <person name="Tice H."/>
            <person name="Pitluck S."/>
            <person name="Chertkov O."/>
            <person name="Brettin T."/>
            <person name="Bruce D."/>
            <person name="Han C."/>
            <person name="Tapia R."/>
            <person name="Gilna P."/>
            <person name="Schmutz J."/>
            <person name="Larimer F."/>
            <person name="Land M."/>
            <person name="Hauser L."/>
            <person name="Kyrpides N."/>
            <person name="Kim E."/>
            <person name="Stahl D."/>
            <person name="Richardson P."/>
        </authorList>
    </citation>
    <scope>NUCLEOTIDE SEQUENCE [LARGE SCALE GENOMIC DNA]</scope>
    <source>
        <strain>JS42</strain>
    </source>
</reference>
<proteinExistence type="inferred from homology"/>
<sequence length="143" mass="14915">MAKKIVGFIKLQVPAGKANPSPPIGPALGQRGLNIMEFCKAFNAQTQGVEPGLPLPVVITAFADKSFTFVIKTPPATVLIKKAIKLDKGSSNALSTKVGKITRAQLEEIAKTKLKDMNAASVDAAVRTLAGSARSMGVTVEGL</sequence>
<evidence type="ECO:0000255" key="1">
    <source>
        <dbReference type="HAMAP-Rule" id="MF_00736"/>
    </source>
</evidence>
<evidence type="ECO:0000305" key="2"/>
<comment type="function">
    <text evidence="1">Forms part of the ribosomal stalk which helps the ribosome interact with GTP-bound translation factors.</text>
</comment>
<comment type="subunit">
    <text evidence="1">Part of the ribosomal stalk of the 50S ribosomal subunit. Interacts with L10 and the large rRNA to form the base of the stalk. L10 forms an elongated spine to which L12 dimers bind in a sequential fashion forming a multimeric L10(L12)X complex.</text>
</comment>
<comment type="PTM">
    <text evidence="1">One or more lysine residues are methylated.</text>
</comment>
<comment type="similarity">
    <text evidence="1">Belongs to the universal ribosomal protein uL11 family.</text>
</comment>
<organism>
    <name type="scientific">Acidovorax sp. (strain JS42)</name>
    <dbReference type="NCBI Taxonomy" id="232721"/>
    <lineage>
        <taxon>Bacteria</taxon>
        <taxon>Pseudomonadati</taxon>
        <taxon>Pseudomonadota</taxon>
        <taxon>Betaproteobacteria</taxon>
        <taxon>Burkholderiales</taxon>
        <taxon>Comamonadaceae</taxon>
        <taxon>Acidovorax</taxon>
    </lineage>
</organism>